<organism>
    <name type="scientific">Escherichia coli O1:K1 / APEC</name>
    <dbReference type="NCBI Taxonomy" id="405955"/>
    <lineage>
        <taxon>Bacteria</taxon>
        <taxon>Pseudomonadati</taxon>
        <taxon>Pseudomonadota</taxon>
        <taxon>Gammaproteobacteria</taxon>
        <taxon>Enterobacterales</taxon>
        <taxon>Enterobacteriaceae</taxon>
        <taxon>Escherichia</taxon>
    </lineage>
</organism>
<keyword id="KW-1003">Cell membrane</keyword>
<keyword id="KW-0472">Membrane</keyword>
<keyword id="KW-1185">Reference proteome</keyword>
<keyword id="KW-0812">Transmembrane</keyword>
<keyword id="KW-1133">Transmembrane helix</keyword>
<evidence type="ECO:0000255" key="1">
    <source>
        <dbReference type="HAMAP-Rule" id="MF_00143"/>
    </source>
</evidence>
<accession>A1AFR5</accession>
<sequence length="164" mass="18641">MERFLENAMYASRWLLAPVYFGLSLALVALALKFFQEIIHVLPNIFSMAESDLILVLLSLVDMTLVGGLLVMVMFSGYENFVSQLDISENKEKLNWLGKMDATSLKNKVAASIVAISSIHLLRVFMDAKNVPDNKLMWYVIIHLTFVLSAFVMGYLDRLTRHNH</sequence>
<reference key="1">
    <citation type="journal article" date="2007" name="J. Bacteriol.">
        <title>The genome sequence of avian pathogenic Escherichia coli strain O1:K1:H7 shares strong similarities with human extraintestinal pathogenic E. coli genomes.</title>
        <authorList>
            <person name="Johnson T.J."/>
            <person name="Kariyawasam S."/>
            <person name="Wannemuehler Y."/>
            <person name="Mangiamele P."/>
            <person name="Johnson S.J."/>
            <person name="Doetkott C."/>
            <person name="Skyberg J.A."/>
            <person name="Lynne A.M."/>
            <person name="Johnson J.R."/>
            <person name="Nolan L.K."/>
        </authorList>
    </citation>
    <scope>NUCLEOTIDE SEQUENCE [LARGE SCALE GENOMIC DNA]</scope>
</reference>
<name>YQHA_ECOK1</name>
<protein>
    <recommendedName>
        <fullName evidence="1">UPF0114 protein YqhA</fullName>
    </recommendedName>
</protein>
<comment type="subcellular location">
    <subcellularLocation>
        <location evidence="1">Cell membrane</location>
        <topology evidence="1">Multi-pass membrane protein</topology>
    </subcellularLocation>
</comment>
<comment type="similarity">
    <text evidence="1">Belongs to the UPF0114 family.</text>
</comment>
<gene>
    <name evidence="1" type="primary">yqhA</name>
    <name type="ordered locus">Ecok1_30110</name>
    <name type="ORF">APECO1_3421</name>
</gene>
<proteinExistence type="inferred from homology"/>
<dbReference type="EMBL" id="CP000468">
    <property type="protein sequence ID" value="ABJ02505.1"/>
    <property type="molecule type" value="Genomic_DNA"/>
</dbReference>
<dbReference type="RefSeq" id="WP_000439331.1">
    <property type="nucleotide sequence ID" value="NZ_CADILS010000042.1"/>
</dbReference>
<dbReference type="KEGG" id="ecv:APECO1_3421"/>
<dbReference type="HOGENOM" id="CLU_097887_1_1_6"/>
<dbReference type="Proteomes" id="UP000008216">
    <property type="component" value="Chromosome"/>
</dbReference>
<dbReference type="GO" id="GO:0005886">
    <property type="term" value="C:plasma membrane"/>
    <property type="evidence" value="ECO:0007669"/>
    <property type="project" value="UniProtKB-SubCell"/>
</dbReference>
<dbReference type="HAMAP" id="MF_00143">
    <property type="entry name" value="UPF0114"/>
    <property type="match status" value="1"/>
</dbReference>
<dbReference type="InterPro" id="IPR005134">
    <property type="entry name" value="UPF0114"/>
</dbReference>
<dbReference type="InterPro" id="IPR020761">
    <property type="entry name" value="UPF0114_bac"/>
</dbReference>
<dbReference type="NCBIfam" id="TIGR00645">
    <property type="entry name" value="HI0507"/>
    <property type="match status" value="1"/>
</dbReference>
<dbReference type="PANTHER" id="PTHR38596">
    <property type="entry name" value="UPF0114 PROTEIN YQHA"/>
    <property type="match status" value="1"/>
</dbReference>
<dbReference type="PANTHER" id="PTHR38596:SF1">
    <property type="entry name" value="UPF0114 PROTEIN YQHA"/>
    <property type="match status" value="1"/>
</dbReference>
<dbReference type="Pfam" id="PF03350">
    <property type="entry name" value="UPF0114"/>
    <property type="match status" value="1"/>
</dbReference>
<feature type="chain" id="PRO_1000009477" description="UPF0114 protein YqhA">
    <location>
        <begin position="1"/>
        <end position="164"/>
    </location>
</feature>
<feature type="transmembrane region" description="Helical" evidence="1">
    <location>
        <begin position="15"/>
        <end position="35"/>
    </location>
</feature>
<feature type="transmembrane region" description="Helical" evidence="1">
    <location>
        <begin position="53"/>
        <end position="73"/>
    </location>
</feature>
<feature type="transmembrane region" description="Helical" evidence="1">
    <location>
        <begin position="136"/>
        <end position="156"/>
    </location>
</feature>